<dbReference type="EMBL" id="FM992692">
    <property type="protein sequence ID" value="CAX41730.1"/>
    <property type="molecule type" value="Genomic_DNA"/>
</dbReference>
<dbReference type="RefSeq" id="XP_002420648.1">
    <property type="nucleotide sequence ID" value="XM_002420603.1"/>
</dbReference>
<dbReference type="SMR" id="B9WHT6"/>
<dbReference type="GeneID" id="8048238"/>
<dbReference type="KEGG" id="cdu:CD36_53530"/>
<dbReference type="CGD" id="CAL0000170432">
    <property type="gene designation" value="Cd36_53530"/>
</dbReference>
<dbReference type="VEuPathDB" id="FungiDB:CD36_53530"/>
<dbReference type="eggNOG" id="KOG4431">
    <property type="taxonomic scope" value="Eukaryota"/>
</dbReference>
<dbReference type="HOGENOM" id="CLU_087356_1_0_1"/>
<dbReference type="OrthoDB" id="6604018at2759"/>
<dbReference type="Proteomes" id="UP000002605">
    <property type="component" value="Chromosome 5"/>
</dbReference>
<dbReference type="GO" id="GO:0031966">
    <property type="term" value="C:mitochondrial membrane"/>
    <property type="evidence" value="ECO:0007669"/>
    <property type="project" value="UniProtKB-SubCell"/>
</dbReference>
<dbReference type="GO" id="GO:0097250">
    <property type="term" value="P:mitochondrial respirasome assembly"/>
    <property type="evidence" value="ECO:0007669"/>
    <property type="project" value="TreeGrafter"/>
</dbReference>
<dbReference type="Gene3D" id="6.10.140.1320">
    <property type="match status" value="1"/>
</dbReference>
<dbReference type="InterPro" id="IPR007667">
    <property type="entry name" value="Hypoxia_induced_domain"/>
</dbReference>
<dbReference type="InterPro" id="IPR050355">
    <property type="entry name" value="RCF1"/>
</dbReference>
<dbReference type="PANTHER" id="PTHR12297:SF3">
    <property type="entry name" value="HIG1 DOMAIN FAMILY MEMBER 1A"/>
    <property type="match status" value="1"/>
</dbReference>
<dbReference type="PANTHER" id="PTHR12297">
    <property type="entry name" value="HYPOXIA-INDUCBILE GENE 1 HIG1 -RELATED"/>
    <property type="match status" value="1"/>
</dbReference>
<dbReference type="Pfam" id="PF04588">
    <property type="entry name" value="HIG_1_N"/>
    <property type="match status" value="1"/>
</dbReference>
<dbReference type="PROSITE" id="PS51503">
    <property type="entry name" value="HIG1"/>
    <property type="match status" value="1"/>
</dbReference>
<comment type="function">
    <text evidence="1">Cytochrome c oxidase subunit which plays a role in assembly of respiratory supercomplexes.</text>
</comment>
<comment type="subunit">
    <text evidence="1">Associates with the respiratory chain complex III/complex IV supercomplex.</text>
</comment>
<comment type="subcellular location">
    <subcellularLocation>
        <location evidence="3">Mitochondrion membrane</location>
        <topology evidence="3">Multi-pass membrane protein</topology>
    </subcellularLocation>
</comment>
<comment type="similarity">
    <text evidence="4">Belongs to the RCF1 family.</text>
</comment>
<sequence length="155" mass="18170">MSVRLPSSMSYGEEEEPDVLQKMWEKSKQQPFVPLGSLLTAGAVLLAARSMKRGEKLKTQRYFRYRIGFQLATLVALVGGGFYYGTETSEHKQIREDKLREKAKQREKLWIEELERRDSIIQARKQRLEESKKELRELAKQGFIEEKESNDEKED</sequence>
<gene>
    <name type="primary">RCF1</name>
    <name type="synonym">AIM31</name>
    <name type="ORF">CD36_53530</name>
</gene>
<feature type="chain" id="PRO_0000399625" description="Respiratory supercomplex factor 1, mitochondrial">
    <location>
        <begin position="1"/>
        <end position="155"/>
    </location>
</feature>
<feature type="transmembrane region" description="Helical" evidence="3">
    <location>
        <begin position="32"/>
        <end position="49"/>
    </location>
</feature>
<feature type="transmembrane region" description="Helical" evidence="3">
    <location>
        <begin position="62"/>
        <end position="84"/>
    </location>
</feature>
<feature type="domain" description="HIG1" evidence="3">
    <location>
        <begin position="4"/>
        <end position="95"/>
    </location>
</feature>
<feature type="coiled-coil region" evidence="2">
    <location>
        <begin position="111"/>
        <end position="142"/>
    </location>
</feature>
<name>RCF1_CANDC</name>
<keyword id="KW-0175">Coiled coil</keyword>
<keyword id="KW-0472">Membrane</keyword>
<keyword id="KW-0496">Mitochondrion</keyword>
<keyword id="KW-0812">Transmembrane</keyword>
<keyword id="KW-1133">Transmembrane helix</keyword>
<accession>B9WHT6</accession>
<organism>
    <name type="scientific">Candida dubliniensis (strain CD36 / ATCC MYA-646 / CBS 7987 / NCPF 3949 / NRRL Y-17841)</name>
    <name type="common">Yeast</name>
    <dbReference type="NCBI Taxonomy" id="573826"/>
    <lineage>
        <taxon>Eukaryota</taxon>
        <taxon>Fungi</taxon>
        <taxon>Dikarya</taxon>
        <taxon>Ascomycota</taxon>
        <taxon>Saccharomycotina</taxon>
        <taxon>Pichiomycetes</taxon>
        <taxon>Debaryomycetaceae</taxon>
        <taxon>Candida/Lodderomyces clade</taxon>
        <taxon>Candida</taxon>
    </lineage>
</organism>
<protein>
    <recommendedName>
        <fullName>Respiratory supercomplex factor 1, mitochondrial</fullName>
    </recommendedName>
</protein>
<evidence type="ECO:0000250" key="1"/>
<evidence type="ECO:0000255" key="2"/>
<evidence type="ECO:0000255" key="3">
    <source>
        <dbReference type="PROSITE-ProRule" id="PRU00836"/>
    </source>
</evidence>
<evidence type="ECO:0000305" key="4"/>
<proteinExistence type="inferred from homology"/>
<reference key="1">
    <citation type="journal article" date="2009" name="Genome Res.">
        <title>Comparative genomics of the fungal pathogens Candida dubliniensis and Candida albicans.</title>
        <authorList>
            <person name="Jackson A.P."/>
            <person name="Gamble J.A."/>
            <person name="Yeomans T."/>
            <person name="Moran G.P."/>
            <person name="Saunders D."/>
            <person name="Harris D."/>
            <person name="Aslett M."/>
            <person name="Barrell J.F."/>
            <person name="Butler G."/>
            <person name="Citiulo F."/>
            <person name="Coleman D.C."/>
            <person name="de Groot P.W.J."/>
            <person name="Goodwin T.J."/>
            <person name="Quail M.A."/>
            <person name="McQuillan J."/>
            <person name="Munro C.A."/>
            <person name="Pain A."/>
            <person name="Poulter R.T."/>
            <person name="Rajandream M.A."/>
            <person name="Renauld H."/>
            <person name="Spiering M.J."/>
            <person name="Tivey A."/>
            <person name="Gow N.A.R."/>
            <person name="Barrell B."/>
            <person name="Sullivan D.J."/>
            <person name="Berriman M."/>
        </authorList>
    </citation>
    <scope>NUCLEOTIDE SEQUENCE [LARGE SCALE GENOMIC DNA]</scope>
    <source>
        <strain>CD36 / ATCC MYA-646 / CBS 7987 / NCPF 3949 / NRRL Y-17841</strain>
    </source>
</reference>